<name>IF6_SACI4</name>
<reference key="1">
    <citation type="journal article" date="2009" name="Proc. Natl. Acad. Sci. U.S.A.">
        <title>Biogeography of the Sulfolobus islandicus pan-genome.</title>
        <authorList>
            <person name="Reno M.L."/>
            <person name="Held N.L."/>
            <person name="Fields C.J."/>
            <person name="Burke P.V."/>
            <person name="Whitaker R.J."/>
        </authorList>
    </citation>
    <scope>NUCLEOTIDE SEQUENCE [LARGE SCALE GENOMIC DNA]</scope>
    <source>
        <strain>M.14.25 / Kamchatka #1</strain>
    </source>
</reference>
<comment type="function">
    <text evidence="1">Binds to the 50S ribosomal subunit and prevents its association with the 30S ribosomal subunit to form the 70S initiation complex.</text>
</comment>
<comment type="similarity">
    <text evidence="1">Belongs to the eIF-6 family.</text>
</comment>
<proteinExistence type="inferred from homology"/>
<dbReference type="EMBL" id="CP001400">
    <property type="protein sequence ID" value="ACP38501.1"/>
    <property type="molecule type" value="Genomic_DNA"/>
</dbReference>
<dbReference type="RefSeq" id="WP_012711731.1">
    <property type="nucleotide sequence ID" value="NC_012588.1"/>
</dbReference>
<dbReference type="SMR" id="C3MXG7"/>
<dbReference type="KEGG" id="sia:M1425_1755"/>
<dbReference type="HOGENOM" id="CLU_071894_1_0_2"/>
<dbReference type="Proteomes" id="UP000001350">
    <property type="component" value="Chromosome"/>
</dbReference>
<dbReference type="GO" id="GO:0043022">
    <property type="term" value="F:ribosome binding"/>
    <property type="evidence" value="ECO:0007669"/>
    <property type="project" value="InterPro"/>
</dbReference>
<dbReference type="GO" id="GO:0003743">
    <property type="term" value="F:translation initiation factor activity"/>
    <property type="evidence" value="ECO:0007669"/>
    <property type="project" value="UniProtKB-UniRule"/>
</dbReference>
<dbReference type="GO" id="GO:0042256">
    <property type="term" value="P:cytosolic ribosome assembly"/>
    <property type="evidence" value="ECO:0007669"/>
    <property type="project" value="InterPro"/>
</dbReference>
<dbReference type="FunFam" id="3.75.10.10:FF:000011">
    <property type="entry name" value="Translation initiation factor 6"/>
    <property type="match status" value="1"/>
</dbReference>
<dbReference type="Gene3D" id="3.75.10.10">
    <property type="entry name" value="L-arginine/glycine Amidinotransferase, Chain A"/>
    <property type="match status" value="1"/>
</dbReference>
<dbReference type="HAMAP" id="MF_00032">
    <property type="entry name" value="eIF_6"/>
    <property type="match status" value="1"/>
</dbReference>
<dbReference type="InterPro" id="IPR002769">
    <property type="entry name" value="eIF6"/>
</dbReference>
<dbReference type="NCBIfam" id="TIGR00323">
    <property type="entry name" value="eIF-6"/>
    <property type="match status" value="1"/>
</dbReference>
<dbReference type="NCBIfam" id="NF003126">
    <property type="entry name" value="PRK04046.1-1"/>
    <property type="match status" value="1"/>
</dbReference>
<dbReference type="PANTHER" id="PTHR10784">
    <property type="entry name" value="TRANSLATION INITIATION FACTOR 6"/>
    <property type="match status" value="1"/>
</dbReference>
<dbReference type="Pfam" id="PF01912">
    <property type="entry name" value="eIF-6"/>
    <property type="match status" value="1"/>
</dbReference>
<dbReference type="PIRSF" id="PIRSF006413">
    <property type="entry name" value="IF-6"/>
    <property type="match status" value="1"/>
</dbReference>
<dbReference type="SMART" id="SM00654">
    <property type="entry name" value="eIF6"/>
    <property type="match status" value="1"/>
</dbReference>
<dbReference type="SUPFAM" id="SSF55909">
    <property type="entry name" value="Pentein"/>
    <property type="match status" value="1"/>
</dbReference>
<accession>C3MXG7</accession>
<gene>
    <name evidence="1" type="primary">eif6</name>
    <name type="ordered locus">M1425_1755</name>
</gene>
<keyword id="KW-0396">Initiation factor</keyword>
<keyword id="KW-0648">Protein biosynthesis</keyword>
<organism>
    <name type="scientific">Saccharolobus islandicus (strain M.14.25 / Kamchatka #1)</name>
    <name type="common">Sulfolobus islandicus</name>
    <dbReference type="NCBI Taxonomy" id="427317"/>
    <lineage>
        <taxon>Archaea</taxon>
        <taxon>Thermoproteota</taxon>
        <taxon>Thermoprotei</taxon>
        <taxon>Sulfolobales</taxon>
        <taxon>Sulfolobaceae</taxon>
        <taxon>Saccharolobus</taxon>
    </lineage>
</organism>
<feature type="chain" id="PRO_1000202010" description="Translation initiation factor 6">
    <location>
        <begin position="1"/>
        <end position="223"/>
    </location>
</feature>
<sequence length="223" mass="24473">MNLQRLSIFGTDNIGVYIYTNNKYTVVPRGLDSETKENIVQILGTELIEAEISRSFLLGIFISGNDNGILLPKSTIDDEFRFLKENLRDCRVEVLNSKVTALGNTILTNNKAALIYPEFNDIEEKIIKETLGVEEIRRGKIAQMITVGSVGVVTNKGGLVHVDTSEKELKELEKLFGVKIDIGTVNFGSVFIRSGLVANDKGTLVGASTTGPEILRIQKALGE</sequence>
<protein>
    <recommendedName>
        <fullName evidence="1">Translation initiation factor 6</fullName>
        <shortName evidence="1">aIF-6</shortName>
    </recommendedName>
</protein>
<evidence type="ECO:0000255" key="1">
    <source>
        <dbReference type="HAMAP-Rule" id="MF_00032"/>
    </source>
</evidence>